<comment type="function">
    <text evidence="1">Catalyzes the interconversion of beta-pyran and beta-furan forms of D-ribose.</text>
</comment>
<comment type="catalytic activity">
    <reaction evidence="1">
        <text>beta-D-ribopyranose = beta-D-ribofuranose</text>
        <dbReference type="Rhea" id="RHEA:25432"/>
        <dbReference type="ChEBI" id="CHEBI:27476"/>
        <dbReference type="ChEBI" id="CHEBI:47002"/>
        <dbReference type="EC" id="5.4.99.62"/>
    </reaction>
</comment>
<comment type="pathway">
    <text evidence="1">Carbohydrate metabolism; D-ribose degradation; D-ribose 5-phosphate from beta-D-ribopyranose: step 1/2.</text>
</comment>
<comment type="subunit">
    <text evidence="1">Homodecamer.</text>
</comment>
<comment type="subcellular location">
    <subcellularLocation>
        <location evidence="1">Cytoplasm</location>
    </subcellularLocation>
</comment>
<comment type="similarity">
    <text evidence="1">Belongs to the RbsD / FucU family. RbsD subfamily.</text>
</comment>
<reference key="1">
    <citation type="journal article" date="2006" name="Lancet">
        <title>Complete genome sequence of USA300, an epidemic clone of community-acquired meticillin-resistant Staphylococcus aureus.</title>
        <authorList>
            <person name="Diep B.A."/>
            <person name="Gill S.R."/>
            <person name="Chang R.F."/>
            <person name="Phan T.H."/>
            <person name="Chen J.H."/>
            <person name="Davidson M.G."/>
            <person name="Lin F."/>
            <person name="Lin J."/>
            <person name="Carleton H.A."/>
            <person name="Mongodin E.F."/>
            <person name="Sensabaugh G.F."/>
            <person name="Perdreau-Remington F."/>
        </authorList>
    </citation>
    <scope>NUCLEOTIDE SEQUENCE [LARGE SCALE GENOMIC DNA]</scope>
    <source>
        <strain>USA300</strain>
    </source>
</reference>
<evidence type="ECO:0000255" key="1">
    <source>
        <dbReference type="HAMAP-Rule" id="MF_01661"/>
    </source>
</evidence>
<proteinExistence type="inferred from homology"/>
<name>RBSD_STAA3</name>
<feature type="chain" id="PRO_0000346274" description="D-ribose pyranase">
    <location>
        <begin position="1"/>
        <end position="134"/>
    </location>
</feature>
<feature type="active site" description="Proton donor" evidence="1">
    <location>
        <position position="20"/>
    </location>
</feature>
<feature type="binding site" evidence="1">
    <location>
        <position position="28"/>
    </location>
    <ligand>
        <name>substrate</name>
    </ligand>
</feature>
<feature type="binding site" evidence="1">
    <location>
        <position position="99"/>
    </location>
    <ligand>
        <name>substrate</name>
    </ligand>
</feature>
<feature type="binding site" evidence="1">
    <location>
        <begin position="123"/>
        <end position="125"/>
    </location>
    <ligand>
        <name>substrate</name>
    </ligand>
</feature>
<gene>
    <name evidence="1" type="primary">rbsD</name>
    <name type="ordered locus">SAUSA300_0263</name>
</gene>
<sequence length="134" mass="15180">MKKSAILNEHISKAIATIGHFDLLTINDAGMPIPNDHRRIDLAVTKNLPRFIDVLATVLEEMEIQKIYLAEEIKEHNPTQLQQIKQLISSEIEIIFIPHEEMKSNLAHPLNKGNIRTGETTPYSNIALESNVTF</sequence>
<dbReference type="EC" id="5.4.99.62" evidence="1"/>
<dbReference type="EMBL" id="CP000255">
    <property type="protein sequence ID" value="ABD21775.1"/>
    <property type="molecule type" value="Genomic_DNA"/>
</dbReference>
<dbReference type="RefSeq" id="WP_000747850.1">
    <property type="nucleotide sequence ID" value="NZ_CP027476.1"/>
</dbReference>
<dbReference type="SMR" id="Q2FK01"/>
<dbReference type="KEGG" id="saa:SAUSA300_0263"/>
<dbReference type="HOGENOM" id="CLU_135498_0_0_9"/>
<dbReference type="OMA" id="EQTPYAN"/>
<dbReference type="UniPathway" id="UPA00916">
    <property type="reaction ID" value="UER00888"/>
</dbReference>
<dbReference type="Proteomes" id="UP000001939">
    <property type="component" value="Chromosome"/>
</dbReference>
<dbReference type="GO" id="GO:0005829">
    <property type="term" value="C:cytosol"/>
    <property type="evidence" value="ECO:0007669"/>
    <property type="project" value="TreeGrafter"/>
</dbReference>
<dbReference type="GO" id="GO:0062193">
    <property type="term" value="F:D-ribose pyranase activity"/>
    <property type="evidence" value="ECO:0007669"/>
    <property type="project" value="UniProtKB-EC"/>
</dbReference>
<dbReference type="GO" id="GO:0016872">
    <property type="term" value="F:intramolecular lyase activity"/>
    <property type="evidence" value="ECO:0007669"/>
    <property type="project" value="UniProtKB-UniRule"/>
</dbReference>
<dbReference type="GO" id="GO:0048029">
    <property type="term" value="F:monosaccharide binding"/>
    <property type="evidence" value="ECO:0007669"/>
    <property type="project" value="InterPro"/>
</dbReference>
<dbReference type="GO" id="GO:0019303">
    <property type="term" value="P:D-ribose catabolic process"/>
    <property type="evidence" value="ECO:0007669"/>
    <property type="project" value="UniProtKB-UniRule"/>
</dbReference>
<dbReference type="FunFam" id="3.40.1650.10:FF:000004">
    <property type="entry name" value="D-ribose pyranase"/>
    <property type="match status" value="1"/>
</dbReference>
<dbReference type="Gene3D" id="3.40.1650.10">
    <property type="entry name" value="RbsD-like domain"/>
    <property type="match status" value="1"/>
</dbReference>
<dbReference type="HAMAP" id="MF_01661">
    <property type="entry name" value="D_rib_pyranase"/>
    <property type="match status" value="1"/>
</dbReference>
<dbReference type="InterPro" id="IPR023064">
    <property type="entry name" value="D-ribose_pyranase"/>
</dbReference>
<dbReference type="InterPro" id="IPR023750">
    <property type="entry name" value="RbsD-like_sf"/>
</dbReference>
<dbReference type="InterPro" id="IPR007721">
    <property type="entry name" value="RbsD_FucU"/>
</dbReference>
<dbReference type="NCBIfam" id="NF008761">
    <property type="entry name" value="PRK11797.1"/>
    <property type="match status" value="1"/>
</dbReference>
<dbReference type="PANTHER" id="PTHR37831">
    <property type="entry name" value="D-RIBOSE PYRANASE"/>
    <property type="match status" value="1"/>
</dbReference>
<dbReference type="PANTHER" id="PTHR37831:SF1">
    <property type="entry name" value="D-RIBOSE PYRANASE"/>
    <property type="match status" value="1"/>
</dbReference>
<dbReference type="Pfam" id="PF05025">
    <property type="entry name" value="RbsD_FucU"/>
    <property type="match status" value="1"/>
</dbReference>
<dbReference type="SUPFAM" id="SSF102546">
    <property type="entry name" value="RbsD-like"/>
    <property type="match status" value="1"/>
</dbReference>
<protein>
    <recommendedName>
        <fullName evidence="1">D-ribose pyranase</fullName>
        <ecNumber evidence="1">5.4.99.62</ecNumber>
    </recommendedName>
</protein>
<accession>Q2FK01</accession>
<organism>
    <name type="scientific">Staphylococcus aureus (strain USA300)</name>
    <dbReference type="NCBI Taxonomy" id="367830"/>
    <lineage>
        <taxon>Bacteria</taxon>
        <taxon>Bacillati</taxon>
        <taxon>Bacillota</taxon>
        <taxon>Bacilli</taxon>
        <taxon>Bacillales</taxon>
        <taxon>Staphylococcaceae</taxon>
        <taxon>Staphylococcus</taxon>
    </lineage>
</organism>
<keyword id="KW-0119">Carbohydrate metabolism</keyword>
<keyword id="KW-0963">Cytoplasm</keyword>
<keyword id="KW-0413">Isomerase</keyword>